<name>TDCC_YERE8</name>
<evidence type="ECO:0000255" key="1">
    <source>
        <dbReference type="HAMAP-Rule" id="MF_01583"/>
    </source>
</evidence>
<reference key="1">
    <citation type="journal article" date="2006" name="PLoS Genet.">
        <title>The complete genome sequence and comparative genome analysis of the high pathogenicity Yersinia enterocolitica strain 8081.</title>
        <authorList>
            <person name="Thomson N.R."/>
            <person name="Howard S."/>
            <person name="Wren B.W."/>
            <person name="Holden M.T.G."/>
            <person name="Crossman L."/>
            <person name="Challis G.L."/>
            <person name="Churcher C."/>
            <person name="Mungall K."/>
            <person name="Brooks K."/>
            <person name="Chillingworth T."/>
            <person name="Feltwell T."/>
            <person name="Abdellah Z."/>
            <person name="Hauser H."/>
            <person name="Jagels K."/>
            <person name="Maddison M."/>
            <person name="Moule S."/>
            <person name="Sanders M."/>
            <person name="Whitehead S."/>
            <person name="Quail M.A."/>
            <person name="Dougan G."/>
            <person name="Parkhill J."/>
            <person name="Prentice M.B."/>
        </authorList>
    </citation>
    <scope>NUCLEOTIDE SEQUENCE [LARGE SCALE GENOMIC DNA]</scope>
    <source>
        <strain>NCTC 13174 / 8081</strain>
    </source>
</reference>
<accession>A1JIM8</accession>
<keyword id="KW-0029">Amino-acid transport</keyword>
<keyword id="KW-0997">Cell inner membrane</keyword>
<keyword id="KW-1003">Cell membrane</keyword>
<keyword id="KW-0472">Membrane</keyword>
<keyword id="KW-0769">Symport</keyword>
<keyword id="KW-0812">Transmembrane</keyword>
<keyword id="KW-1133">Transmembrane helix</keyword>
<keyword id="KW-0813">Transport</keyword>
<protein>
    <recommendedName>
        <fullName evidence="1">Threonine/serine transporter TdcC</fullName>
    </recommendedName>
    <alternativeName>
        <fullName evidence="1">H(+)/threonine-serine symporter</fullName>
    </alternativeName>
</protein>
<organism>
    <name type="scientific">Yersinia enterocolitica serotype O:8 / biotype 1B (strain NCTC 13174 / 8081)</name>
    <dbReference type="NCBI Taxonomy" id="393305"/>
    <lineage>
        <taxon>Bacteria</taxon>
        <taxon>Pseudomonadati</taxon>
        <taxon>Pseudomonadota</taxon>
        <taxon>Gammaproteobacteria</taxon>
        <taxon>Enterobacterales</taxon>
        <taxon>Yersiniaceae</taxon>
        <taxon>Yersinia</taxon>
    </lineage>
</organism>
<sequence>MHIDNAITTTIETKTWRKSDTTWTLGLFGTAIGAGVLFFPIRAGFGGLIPILIMLVLAYPIAFLCHRALARLCLSGSNCSGNITETVEEHFGKTGGVVITFLYFFAICPLLWIYGVTITNTFMTFWENQLQLAPLNRGVVALALLLLMAVVIYFGKDLMVKVMSFLVFPFIACLVLISLSLIPYWNASVIEQVDLSQISLLGHDGILVTVWLGISIMVFSFNFSPIVSSFVVSKREEYEPEFGREYTEKKCSQIISRASILMVAVVMFFAFSCLFTLSPQNMAEAKAQNIPVLSYLANHFSSMAGSRSTFSITLEYAASLIALVAIFKSFFGHYLGTLEGLNGLVIKFGYKGDKTKISSGKLNLISMFFIMGSTWLVAYINPNILDLIEAMGAPIIASLLCLLPMYAIHKLPSLARFRGRPENYFVTIVGLLTIFNIVYKLL</sequence>
<comment type="function">
    <text evidence="1">Involved in the import of threonine and serine into the cell, with the concomitant import of a proton (symport system).</text>
</comment>
<comment type="catalytic activity">
    <reaction evidence="1">
        <text>L-threonine(in) + H(+)(in) = L-threonine(out) + H(+)(out)</text>
        <dbReference type="Rhea" id="RHEA:28883"/>
        <dbReference type="ChEBI" id="CHEBI:15378"/>
        <dbReference type="ChEBI" id="CHEBI:57926"/>
    </reaction>
    <physiologicalReaction direction="right-to-left" evidence="1">
        <dbReference type="Rhea" id="RHEA:28885"/>
    </physiologicalReaction>
</comment>
<comment type="catalytic activity">
    <reaction evidence="1">
        <text>L-serine(in) + H(+)(in) = L-serine(out) + H(+)(out)</text>
        <dbReference type="Rhea" id="RHEA:28887"/>
        <dbReference type="ChEBI" id="CHEBI:15378"/>
        <dbReference type="ChEBI" id="CHEBI:33384"/>
    </reaction>
    <physiologicalReaction direction="right-to-left" evidence="1">
        <dbReference type="Rhea" id="RHEA:28889"/>
    </physiologicalReaction>
</comment>
<comment type="subcellular location">
    <subcellularLocation>
        <location evidence="1">Cell inner membrane</location>
        <topology evidence="1">Multi-pass membrane protein</topology>
    </subcellularLocation>
</comment>
<comment type="similarity">
    <text evidence="1">Belongs to the amino acid/polyamine transporter 2 family. SdaC/TdcC subfamily.</text>
</comment>
<dbReference type="EMBL" id="AM286415">
    <property type="protein sequence ID" value="CAL10467.1"/>
    <property type="molecule type" value="Genomic_DNA"/>
</dbReference>
<dbReference type="RefSeq" id="WP_005175589.1">
    <property type="nucleotide sequence ID" value="NC_008800.1"/>
</dbReference>
<dbReference type="RefSeq" id="YP_001004715.1">
    <property type="nucleotide sequence ID" value="NC_008800.1"/>
</dbReference>
<dbReference type="SMR" id="A1JIM8"/>
<dbReference type="KEGG" id="yen:YE0337"/>
<dbReference type="PATRIC" id="fig|393305.7.peg.432"/>
<dbReference type="eggNOG" id="COG0814">
    <property type="taxonomic scope" value="Bacteria"/>
</dbReference>
<dbReference type="HOGENOM" id="CLU_052043_1_1_6"/>
<dbReference type="OrthoDB" id="1627372at2"/>
<dbReference type="Proteomes" id="UP000000642">
    <property type="component" value="Chromosome"/>
</dbReference>
<dbReference type="GO" id="GO:0005886">
    <property type="term" value="C:plasma membrane"/>
    <property type="evidence" value="ECO:0007669"/>
    <property type="project" value="UniProtKB-SubCell"/>
</dbReference>
<dbReference type="GO" id="GO:0015194">
    <property type="term" value="F:L-serine transmembrane transporter activity"/>
    <property type="evidence" value="ECO:0007669"/>
    <property type="project" value="InterPro"/>
</dbReference>
<dbReference type="GO" id="GO:0015293">
    <property type="term" value="F:symporter activity"/>
    <property type="evidence" value="ECO:0007669"/>
    <property type="project" value="UniProtKB-UniRule"/>
</dbReference>
<dbReference type="GO" id="GO:0015565">
    <property type="term" value="F:threonine efflux transmembrane transporter activity"/>
    <property type="evidence" value="ECO:0007669"/>
    <property type="project" value="InterPro"/>
</dbReference>
<dbReference type="Gene3D" id="1.20.1740.10">
    <property type="entry name" value="Amino acid/polyamine transporter I"/>
    <property type="match status" value="1"/>
</dbReference>
<dbReference type="HAMAP" id="MF_01583">
    <property type="entry name" value="Thr_Ser_transp_TdcC"/>
    <property type="match status" value="1"/>
</dbReference>
<dbReference type="InterPro" id="IPR013057">
    <property type="entry name" value="AA_transpt_TM"/>
</dbReference>
<dbReference type="InterPro" id="IPR018227">
    <property type="entry name" value="Amino_acid_transport_2"/>
</dbReference>
<dbReference type="InterPro" id="IPR004694">
    <property type="entry name" value="Hydroxy_aa_transpt"/>
</dbReference>
<dbReference type="InterPro" id="IPR023726">
    <property type="entry name" value="Thr/Ser_transpt_TdcC"/>
</dbReference>
<dbReference type="NCBIfam" id="NF010152">
    <property type="entry name" value="PRK13629.1"/>
    <property type="match status" value="1"/>
</dbReference>
<dbReference type="NCBIfam" id="TIGR00814">
    <property type="entry name" value="stp"/>
    <property type="match status" value="1"/>
</dbReference>
<dbReference type="PANTHER" id="PTHR35334">
    <property type="entry name" value="SERINE TRANSPORTER"/>
    <property type="match status" value="1"/>
</dbReference>
<dbReference type="PANTHER" id="PTHR35334:SF1">
    <property type="entry name" value="THREONINE_SERINE TRANSPORTER TDCC"/>
    <property type="match status" value="1"/>
</dbReference>
<dbReference type="Pfam" id="PF01490">
    <property type="entry name" value="Aa_trans"/>
    <property type="match status" value="1"/>
</dbReference>
<feature type="chain" id="PRO_0000309176" description="Threonine/serine transporter TdcC">
    <location>
        <begin position="1"/>
        <end position="442"/>
    </location>
</feature>
<feature type="transmembrane region" description="Helical" evidence="1">
    <location>
        <begin position="21"/>
        <end position="41"/>
    </location>
</feature>
<feature type="transmembrane region" description="Helical" evidence="1">
    <location>
        <begin position="44"/>
        <end position="64"/>
    </location>
</feature>
<feature type="transmembrane region" description="Helical" evidence="1">
    <location>
        <begin position="96"/>
        <end position="116"/>
    </location>
</feature>
<feature type="transmembrane region" description="Helical" evidence="1">
    <location>
        <begin position="139"/>
        <end position="159"/>
    </location>
</feature>
<feature type="transmembrane region" description="Helical" evidence="1">
    <location>
        <begin position="162"/>
        <end position="182"/>
    </location>
</feature>
<feature type="transmembrane region" description="Helical" evidence="1">
    <location>
        <begin position="206"/>
        <end position="226"/>
    </location>
</feature>
<feature type="transmembrane region" description="Helical" evidence="1">
    <location>
        <begin position="258"/>
        <end position="278"/>
    </location>
</feature>
<feature type="transmembrane region" description="Helical" evidence="1">
    <location>
        <begin position="312"/>
        <end position="332"/>
    </location>
</feature>
<feature type="transmembrane region" description="Helical" evidence="1">
    <location>
        <begin position="364"/>
        <end position="384"/>
    </location>
</feature>
<feature type="transmembrane region" description="Helical" evidence="1">
    <location>
        <begin position="388"/>
        <end position="408"/>
    </location>
</feature>
<feature type="transmembrane region" description="Helical" evidence="1">
    <location>
        <begin position="422"/>
        <end position="442"/>
    </location>
</feature>
<gene>
    <name evidence="1" type="primary">tdcC</name>
    <name type="ordered locus">YE0337</name>
</gene>
<proteinExistence type="inferred from homology"/>